<accession>B1YSR4</accession>
<sequence>MVLDELISEFDRGLRSLTGISRMSRPVPVPTEPTVGELTPAERAHAAGLMRVNHVGEVCAQALYQAQKLTARSASSKAMFEEAAREEEDHLAWTAHRLKELDSRPSLLNPLWYAGALAIGVAAGTLGDKVSLGFMAETERQVESHLDGHLSELPATDTASRAIVEQMRVDEVKHGKAATDAGGIELPLPARMLMRAASKVMTRTAYYL</sequence>
<feature type="chain" id="PRO_1000187043" description="3-demethoxyubiquinol 3-hydroxylase">
    <location>
        <begin position="1"/>
        <end position="208"/>
    </location>
</feature>
<feature type="binding site" evidence="1">
    <location>
        <position position="57"/>
    </location>
    <ligand>
        <name>Fe cation</name>
        <dbReference type="ChEBI" id="CHEBI:24875"/>
        <label>1</label>
    </ligand>
</feature>
<feature type="binding site" evidence="1">
    <location>
        <position position="87"/>
    </location>
    <ligand>
        <name>Fe cation</name>
        <dbReference type="ChEBI" id="CHEBI:24875"/>
        <label>1</label>
    </ligand>
</feature>
<feature type="binding site" evidence="1">
    <location>
        <position position="87"/>
    </location>
    <ligand>
        <name>Fe cation</name>
        <dbReference type="ChEBI" id="CHEBI:24875"/>
        <label>2</label>
    </ligand>
</feature>
<feature type="binding site" evidence="1">
    <location>
        <position position="90"/>
    </location>
    <ligand>
        <name>Fe cation</name>
        <dbReference type="ChEBI" id="CHEBI:24875"/>
        <label>1</label>
    </ligand>
</feature>
<feature type="binding site" evidence="1">
    <location>
        <position position="139"/>
    </location>
    <ligand>
        <name>Fe cation</name>
        <dbReference type="ChEBI" id="CHEBI:24875"/>
        <label>2</label>
    </ligand>
</feature>
<feature type="binding site" evidence="1">
    <location>
        <position position="171"/>
    </location>
    <ligand>
        <name>Fe cation</name>
        <dbReference type="ChEBI" id="CHEBI:24875"/>
        <label>1</label>
    </ligand>
</feature>
<feature type="binding site" evidence="1">
    <location>
        <position position="171"/>
    </location>
    <ligand>
        <name>Fe cation</name>
        <dbReference type="ChEBI" id="CHEBI:24875"/>
        <label>2</label>
    </ligand>
</feature>
<feature type="binding site" evidence="1">
    <location>
        <position position="174"/>
    </location>
    <ligand>
        <name>Fe cation</name>
        <dbReference type="ChEBI" id="CHEBI:24875"/>
        <label>2</label>
    </ligand>
</feature>
<organism>
    <name type="scientific">Burkholderia ambifaria (strain MC40-6)</name>
    <dbReference type="NCBI Taxonomy" id="398577"/>
    <lineage>
        <taxon>Bacteria</taxon>
        <taxon>Pseudomonadati</taxon>
        <taxon>Pseudomonadota</taxon>
        <taxon>Betaproteobacteria</taxon>
        <taxon>Burkholderiales</taxon>
        <taxon>Burkholderiaceae</taxon>
        <taxon>Burkholderia</taxon>
        <taxon>Burkholderia cepacia complex</taxon>
    </lineage>
</organism>
<evidence type="ECO:0000255" key="1">
    <source>
        <dbReference type="HAMAP-Rule" id="MF_01658"/>
    </source>
</evidence>
<name>COQ7_BURA4</name>
<reference key="1">
    <citation type="submission" date="2008-04" db="EMBL/GenBank/DDBJ databases">
        <title>Complete sequence of chromosome 1 of Burkholderia ambifaria MC40-6.</title>
        <authorList>
            <person name="Copeland A."/>
            <person name="Lucas S."/>
            <person name="Lapidus A."/>
            <person name="Glavina del Rio T."/>
            <person name="Dalin E."/>
            <person name="Tice H."/>
            <person name="Pitluck S."/>
            <person name="Chain P."/>
            <person name="Malfatti S."/>
            <person name="Shin M."/>
            <person name="Vergez L."/>
            <person name="Lang D."/>
            <person name="Schmutz J."/>
            <person name="Larimer F."/>
            <person name="Land M."/>
            <person name="Hauser L."/>
            <person name="Kyrpides N."/>
            <person name="Lykidis A."/>
            <person name="Ramette A."/>
            <person name="Konstantinidis K."/>
            <person name="Tiedje J."/>
            <person name="Richardson P."/>
        </authorList>
    </citation>
    <scope>NUCLEOTIDE SEQUENCE [LARGE SCALE GENOMIC DNA]</scope>
    <source>
        <strain>MC40-6</strain>
    </source>
</reference>
<gene>
    <name evidence="1" type="primary">coq7</name>
    <name type="ordered locus">BamMC406_0478</name>
</gene>
<protein>
    <recommendedName>
        <fullName evidence="1">3-demethoxyubiquinol 3-hydroxylase</fullName>
        <shortName evidence="1">DMQ hydroxylase</shortName>
        <ecNumber evidence="1">1.14.99.60</ecNumber>
    </recommendedName>
    <alternativeName>
        <fullName evidence="1">2-nonaprenyl-3-methyl-6-methoxy-1,4-benzoquinol hydroxylase</fullName>
    </alternativeName>
</protein>
<proteinExistence type="inferred from homology"/>
<keyword id="KW-1003">Cell membrane</keyword>
<keyword id="KW-0408">Iron</keyword>
<keyword id="KW-0472">Membrane</keyword>
<keyword id="KW-0479">Metal-binding</keyword>
<keyword id="KW-0503">Monooxygenase</keyword>
<keyword id="KW-0560">Oxidoreductase</keyword>
<keyword id="KW-0831">Ubiquinone biosynthesis</keyword>
<dbReference type="EC" id="1.14.99.60" evidence="1"/>
<dbReference type="EMBL" id="CP001025">
    <property type="protein sequence ID" value="ACB62975.1"/>
    <property type="molecule type" value="Genomic_DNA"/>
</dbReference>
<dbReference type="RefSeq" id="WP_012363022.1">
    <property type="nucleotide sequence ID" value="NC_010551.1"/>
</dbReference>
<dbReference type="SMR" id="B1YSR4"/>
<dbReference type="KEGG" id="bac:BamMC406_0478"/>
<dbReference type="HOGENOM" id="CLU_088601_0_0_4"/>
<dbReference type="OrthoDB" id="5192789at2"/>
<dbReference type="UniPathway" id="UPA00232"/>
<dbReference type="Proteomes" id="UP000001680">
    <property type="component" value="Chromosome 1"/>
</dbReference>
<dbReference type="GO" id="GO:0005886">
    <property type="term" value="C:plasma membrane"/>
    <property type="evidence" value="ECO:0007669"/>
    <property type="project" value="UniProtKB-SubCell"/>
</dbReference>
<dbReference type="GO" id="GO:0008682">
    <property type="term" value="F:3-demethoxyubiquinol 3-hydroxylase activity"/>
    <property type="evidence" value="ECO:0007669"/>
    <property type="project" value="UniProtKB-EC"/>
</dbReference>
<dbReference type="GO" id="GO:0046872">
    <property type="term" value="F:metal ion binding"/>
    <property type="evidence" value="ECO:0007669"/>
    <property type="project" value="UniProtKB-KW"/>
</dbReference>
<dbReference type="GO" id="GO:0006744">
    <property type="term" value="P:ubiquinone biosynthetic process"/>
    <property type="evidence" value="ECO:0007669"/>
    <property type="project" value="UniProtKB-UniRule"/>
</dbReference>
<dbReference type="CDD" id="cd01042">
    <property type="entry name" value="DMQH"/>
    <property type="match status" value="1"/>
</dbReference>
<dbReference type="Gene3D" id="1.20.1260.10">
    <property type="match status" value="1"/>
</dbReference>
<dbReference type="HAMAP" id="MF_01658">
    <property type="entry name" value="COQ7"/>
    <property type="match status" value="1"/>
</dbReference>
<dbReference type="InterPro" id="IPR047809">
    <property type="entry name" value="COQ7_proteobact"/>
</dbReference>
<dbReference type="InterPro" id="IPR012347">
    <property type="entry name" value="Ferritin-like"/>
</dbReference>
<dbReference type="InterPro" id="IPR009078">
    <property type="entry name" value="Ferritin-like_SF"/>
</dbReference>
<dbReference type="InterPro" id="IPR011566">
    <property type="entry name" value="Ubq_synth_Coq7"/>
</dbReference>
<dbReference type="NCBIfam" id="NF033656">
    <property type="entry name" value="DMQ_monoox_COQ7"/>
    <property type="match status" value="1"/>
</dbReference>
<dbReference type="PANTHER" id="PTHR11237:SF4">
    <property type="entry name" value="5-DEMETHOXYUBIQUINONE HYDROXYLASE, MITOCHONDRIAL"/>
    <property type="match status" value="1"/>
</dbReference>
<dbReference type="PANTHER" id="PTHR11237">
    <property type="entry name" value="COENZYME Q10 BIOSYNTHESIS PROTEIN 7"/>
    <property type="match status" value="1"/>
</dbReference>
<dbReference type="Pfam" id="PF03232">
    <property type="entry name" value="COQ7"/>
    <property type="match status" value="1"/>
</dbReference>
<dbReference type="SUPFAM" id="SSF47240">
    <property type="entry name" value="Ferritin-like"/>
    <property type="match status" value="1"/>
</dbReference>
<comment type="function">
    <text evidence="1">Catalyzes the hydroxylation of 2-nonaprenyl-3-methyl-6-methoxy-1,4-benzoquinol during ubiquinone biosynthesis.</text>
</comment>
<comment type="catalytic activity">
    <reaction evidence="1">
        <text>a 5-methoxy-2-methyl-3-(all-trans-polyprenyl)benzene-1,4-diol + AH2 + O2 = a 3-demethylubiquinol + A + H2O</text>
        <dbReference type="Rhea" id="RHEA:50908"/>
        <dbReference type="Rhea" id="RHEA-COMP:10859"/>
        <dbReference type="Rhea" id="RHEA-COMP:10914"/>
        <dbReference type="ChEBI" id="CHEBI:13193"/>
        <dbReference type="ChEBI" id="CHEBI:15377"/>
        <dbReference type="ChEBI" id="CHEBI:15379"/>
        <dbReference type="ChEBI" id="CHEBI:17499"/>
        <dbReference type="ChEBI" id="CHEBI:84167"/>
        <dbReference type="ChEBI" id="CHEBI:84422"/>
        <dbReference type="EC" id="1.14.99.60"/>
    </reaction>
</comment>
<comment type="cofactor">
    <cofactor evidence="1">
        <name>Fe cation</name>
        <dbReference type="ChEBI" id="CHEBI:24875"/>
    </cofactor>
    <text evidence="1">Binds 2 iron ions per subunit.</text>
</comment>
<comment type="pathway">
    <text evidence="1">Cofactor biosynthesis; ubiquinone biosynthesis.</text>
</comment>
<comment type="subcellular location">
    <subcellularLocation>
        <location evidence="1">Cell membrane</location>
        <topology evidence="1">Peripheral membrane protein</topology>
    </subcellularLocation>
</comment>
<comment type="similarity">
    <text evidence="1">Belongs to the COQ7 family.</text>
</comment>